<protein>
    <recommendedName>
        <fullName evidence="1">NADH-quinone oxidoreductase subunit B</fullName>
        <ecNumber evidence="1">7.1.1.-</ecNumber>
    </recommendedName>
    <alternativeName>
        <fullName evidence="1">NADH dehydrogenase I subunit B</fullName>
    </alternativeName>
    <alternativeName>
        <fullName evidence="1">NDH-1 subunit B</fullName>
    </alternativeName>
</protein>
<evidence type="ECO:0000255" key="1">
    <source>
        <dbReference type="HAMAP-Rule" id="MF_01356"/>
    </source>
</evidence>
<comment type="function">
    <text evidence="1">NDH-1 shuttles electrons from NADH, via FMN and iron-sulfur (Fe-S) centers, to quinones in the respiratory chain. The immediate electron acceptor for the enzyme in this species is believed to be ubiquinone. Couples the redox reaction to proton translocation (for every two electrons transferred, four hydrogen ions are translocated across the cytoplasmic membrane), and thus conserves the redox energy in a proton gradient.</text>
</comment>
<comment type="catalytic activity">
    <reaction evidence="1">
        <text>a quinone + NADH + 5 H(+)(in) = a quinol + NAD(+) + 4 H(+)(out)</text>
        <dbReference type="Rhea" id="RHEA:57888"/>
        <dbReference type="ChEBI" id="CHEBI:15378"/>
        <dbReference type="ChEBI" id="CHEBI:24646"/>
        <dbReference type="ChEBI" id="CHEBI:57540"/>
        <dbReference type="ChEBI" id="CHEBI:57945"/>
        <dbReference type="ChEBI" id="CHEBI:132124"/>
    </reaction>
</comment>
<comment type="cofactor">
    <cofactor evidence="1">
        <name>[4Fe-4S] cluster</name>
        <dbReference type="ChEBI" id="CHEBI:49883"/>
    </cofactor>
    <text evidence="1">Binds 1 [4Fe-4S] cluster.</text>
</comment>
<comment type="subunit">
    <text evidence="1">NDH-1 is composed of 13 different subunits. Subunits NuoB, CD, E, F, and G constitute the peripheral sector of the complex.</text>
</comment>
<comment type="subcellular location">
    <subcellularLocation>
        <location evidence="1">Cell inner membrane</location>
        <topology evidence="1">Peripheral membrane protein</topology>
        <orientation evidence="1">Cytoplasmic side</orientation>
    </subcellularLocation>
</comment>
<comment type="similarity">
    <text evidence="1">Belongs to the complex I 20 kDa subunit family.</text>
</comment>
<reference key="1">
    <citation type="journal article" date="2005" name="Genome Res.">
        <title>Genome sequence of Blochmannia pennsylvanicus indicates parallel evolutionary trends among bacterial mutualists of insects.</title>
        <authorList>
            <person name="Degnan P.H."/>
            <person name="Lazarus A.B."/>
            <person name="Wernegreen J.J."/>
        </authorList>
    </citation>
    <scope>NUCLEOTIDE SEQUENCE [LARGE SCALE GENOMIC DNA]</scope>
    <source>
        <strain>BPEN</strain>
    </source>
</reference>
<dbReference type="EC" id="7.1.1.-" evidence="1"/>
<dbReference type="EMBL" id="CP000016">
    <property type="protein sequence ID" value="AAZ41122.1"/>
    <property type="molecule type" value="Genomic_DNA"/>
</dbReference>
<dbReference type="RefSeq" id="WP_011283033.1">
    <property type="nucleotide sequence ID" value="NC_007292.1"/>
</dbReference>
<dbReference type="SMR" id="Q492H7"/>
<dbReference type="STRING" id="291272.BPEN_508"/>
<dbReference type="KEGG" id="bpn:BPEN_508"/>
<dbReference type="eggNOG" id="COG0377">
    <property type="taxonomic scope" value="Bacteria"/>
</dbReference>
<dbReference type="HOGENOM" id="CLU_055737_7_3_6"/>
<dbReference type="OrthoDB" id="9786737at2"/>
<dbReference type="Proteomes" id="UP000007794">
    <property type="component" value="Chromosome"/>
</dbReference>
<dbReference type="GO" id="GO:0005886">
    <property type="term" value="C:plasma membrane"/>
    <property type="evidence" value="ECO:0007669"/>
    <property type="project" value="UniProtKB-SubCell"/>
</dbReference>
<dbReference type="GO" id="GO:0045271">
    <property type="term" value="C:respiratory chain complex I"/>
    <property type="evidence" value="ECO:0007669"/>
    <property type="project" value="TreeGrafter"/>
</dbReference>
<dbReference type="GO" id="GO:0051539">
    <property type="term" value="F:4 iron, 4 sulfur cluster binding"/>
    <property type="evidence" value="ECO:0007669"/>
    <property type="project" value="UniProtKB-KW"/>
</dbReference>
<dbReference type="GO" id="GO:0005506">
    <property type="term" value="F:iron ion binding"/>
    <property type="evidence" value="ECO:0007669"/>
    <property type="project" value="UniProtKB-UniRule"/>
</dbReference>
<dbReference type="GO" id="GO:0008137">
    <property type="term" value="F:NADH dehydrogenase (ubiquinone) activity"/>
    <property type="evidence" value="ECO:0007669"/>
    <property type="project" value="InterPro"/>
</dbReference>
<dbReference type="GO" id="GO:0050136">
    <property type="term" value="F:NADH:ubiquinone reductase (non-electrogenic) activity"/>
    <property type="evidence" value="ECO:0007669"/>
    <property type="project" value="UniProtKB-UniRule"/>
</dbReference>
<dbReference type="GO" id="GO:0048038">
    <property type="term" value="F:quinone binding"/>
    <property type="evidence" value="ECO:0007669"/>
    <property type="project" value="UniProtKB-KW"/>
</dbReference>
<dbReference type="GO" id="GO:0009060">
    <property type="term" value="P:aerobic respiration"/>
    <property type="evidence" value="ECO:0007669"/>
    <property type="project" value="TreeGrafter"/>
</dbReference>
<dbReference type="GO" id="GO:0015990">
    <property type="term" value="P:electron transport coupled proton transport"/>
    <property type="evidence" value="ECO:0007669"/>
    <property type="project" value="TreeGrafter"/>
</dbReference>
<dbReference type="FunFam" id="3.40.50.12280:FF:000002">
    <property type="entry name" value="NADH-quinone oxidoreductase subunit B"/>
    <property type="match status" value="1"/>
</dbReference>
<dbReference type="Gene3D" id="3.40.50.12280">
    <property type="match status" value="1"/>
</dbReference>
<dbReference type="HAMAP" id="MF_01356">
    <property type="entry name" value="NDH1_NuoB"/>
    <property type="match status" value="1"/>
</dbReference>
<dbReference type="InterPro" id="IPR006137">
    <property type="entry name" value="NADH_UbQ_OxRdtase-like_20kDa"/>
</dbReference>
<dbReference type="InterPro" id="IPR006138">
    <property type="entry name" value="NADH_UQ_OxRdtase_20Kd_su"/>
</dbReference>
<dbReference type="NCBIfam" id="TIGR01957">
    <property type="entry name" value="nuoB_fam"/>
    <property type="match status" value="1"/>
</dbReference>
<dbReference type="NCBIfam" id="NF005012">
    <property type="entry name" value="PRK06411.1"/>
    <property type="match status" value="1"/>
</dbReference>
<dbReference type="PANTHER" id="PTHR11995">
    <property type="entry name" value="NADH DEHYDROGENASE"/>
    <property type="match status" value="1"/>
</dbReference>
<dbReference type="PANTHER" id="PTHR11995:SF14">
    <property type="entry name" value="NADH DEHYDROGENASE [UBIQUINONE] IRON-SULFUR PROTEIN 7, MITOCHONDRIAL"/>
    <property type="match status" value="1"/>
</dbReference>
<dbReference type="Pfam" id="PF01058">
    <property type="entry name" value="Oxidored_q6"/>
    <property type="match status" value="1"/>
</dbReference>
<dbReference type="SUPFAM" id="SSF56770">
    <property type="entry name" value="HydA/Nqo6-like"/>
    <property type="match status" value="1"/>
</dbReference>
<dbReference type="PROSITE" id="PS01150">
    <property type="entry name" value="COMPLEX1_20K"/>
    <property type="match status" value="1"/>
</dbReference>
<accession>Q492H7</accession>
<sequence length="236" mass="26957">MKYTLTTARTDNSEDEQYPLQEKKIVTDPLEKNIQRNVFFGKLSAFLHKIVNWGRGNSLWPYNFGLSCCYVEMTTAFTAIHDVARFGSEVLRASPRQADFMVIAGTPFLKMVPVIQRLYDQMLEPKWVISMGACANSGGMYDIYSVVQGVDKFLPVDLYIPGCPPRPEAYIQGLLLLKKSINEERRPLSWVLGDQGIYRKNMESERQRKRNTRIAETVLSSPDDELNIYSKQNGEA</sequence>
<keyword id="KW-0004">4Fe-4S</keyword>
<keyword id="KW-0997">Cell inner membrane</keyword>
<keyword id="KW-1003">Cell membrane</keyword>
<keyword id="KW-0408">Iron</keyword>
<keyword id="KW-0411">Iron-sulfur</keyword>
<keyword id="KW-0472">Membrane</keyword>
<keyword id="KW-0479">Metal-binding</keyword>
<keyword id="KW-0520">NAD</keyword>
<keyword id="KW-0874">Quinone</keyword>
<keyword id="KW-1185">Reference proteome</keyword>
<keyword id="KW-1278">Translocase</keyword>
<keyword id="KW-0813">Transport</keyword>
<keyword id="KW-0830">Ubiquinone</keyword>
<name>NUOB_BLOPB</name>
<proteinExistence type="inferred from homology"/>
<organism>
    <name type="scientific">Blochmanniella pennsylvanica (strain BPEN)</name>
    <dbReference type="NCBI Taxonomy" id="291272"/>
    <lineage>
        <taxon>Bacteria</taxon>
        <taxon>Pseudomonadati</taxon>
        <taxon>Pseudomonadota</taxon>
        <taxon>Gammaproteobacteria</taxon>
        <taxon>Enterobacterales</taxon>
        <taxon>Enterobacteriaceae</taxon>
        <taxon>ant endosymbionts</taxon>
        <taxon>Candidatus Blochmanniella</taxon>
    </lineage>
</organism>
<feature type="chain" id="PRO_0000376152" description="NADH-quinone oxidoreductase subunit B">
    <location>
        <begin position="1"/>
        <end position="236"/>
    </location>
</feature>
<feature type="binding site" evidence="1">
    <location>
        <position position="68"/>
    </location>
    <ligand>
        <name>[4Fe-4S] cluster</name>
        <dbReference type="ChEBI" id="CHEBI:49883"/>
    </ligand>
</feature>
<feature type="binding site" evidence="1">
    <location>
        <position position="69"/>
    </location>
    <ligand>
        <name>[4Fe-4S] cluster</name>
        <dbReference type="ChEBI" id="CHEBI:49883"/>
    </ligand>
</feature>
<feature type="binding site" evidence="1">
    <location>
        <position position="134"/>
    </location>
    <ligand>
        <name>[4Fe-4S] cluster</name>
        <dbReference type="ChEBI" id="CHEBI:49883"/>
    </ligand>
</feature>
<feature type="binding site" evidence="1">
    <location>
        <position position="163"/>
    </location>
    <ligand>
        <name>[4Fe-4S] cluster</name>
        <dbReference type="ChEBI" id="CHEBI:49883"/>
    </ligand>
</feature>
<gene>
    <name evidence="1" type="primary">nuoB</name>
    <name type="ordered locus">BPEN_508</name>
</gene>